<gene>
    <name evidence="1" type="primary">rplC</name>
    <name type="ordered locus">Helmi_13300</name>
    <name type="ORF">HM1_1378</name>
</gene>
<accession>B0TC56</accession>
<organism>
    <name type="scientific">Heliobacterium modesticaldum (strain ATCC 51547 / Ice1)</name>
    <dbReference type="NCBI Taxonomy" id="498761"/>
    <lineage>
        <taxon>Bacteria</taxon>
        <taxon>Bacillati</taxon>
        <taxon>Bacillota</taxon>
        <taxon>Clostridia</taxon>
        <taxon>Eubacteriales</taxon>
        <taxon>Heliobacteriaceae</taxon>
        <taxon>Heliomicrobium</taxon>
    </lineage>
</organism>
<evidence type="ECO:0000255" key="1">
    <source>
        <dbReference type="HAMAP-Rule" id="MF_01325"/>
    </source>
</evidence>
<evidence type="ECO:0000256" key="2">
    <source>
        <dbReference type="SAM" id="MobiDB-lite"/>
    </source>
</evidence>
<evidence type="ECO:0000305" key="3"/>
<protein>
    <recommendedName>
        <fullName evidence="1">Large ribosomal subunit protein uL3</fullName>
    </recommendedName>
    <alternativeName>
        <fullName evidence="3">50S ribosomal protein L3</fullName>
    </alternativeName>
</protein>
<keyword id="KW-1185">Reference proteome</keyword>
<keyword id="KW-0687">Ribonucleoprotein</keyword>
<keyword id="KW-0689">Ribosomal protein</keyword>
<keyword id="KW-0694">RNA-binding</keyword>
<keyword id="KW-0699">rRNA-binding</keyword>
<proteinExistence type="inferred from homology"/>
<sequence length="210" mass="22833">MAKKGLLGRKIGMTQVFADNGVAVPVTVVQAGPCVVVQKKTVEKDGYEAVQIGFGDVREKLLNKPKRGHLKNAGVRLVRVLREIKVDSMDEYKVGQELKADVFSAGEYVDVVGTSKGKGFAGGIKRHNFKRGPMKHGSKYHRRPGSAGAKGPARIFKGRKMPGRMGNERVTVQKLQVVRVDAERNLLLIKGAVPGPKRGLLLIKSSIKAK</sequence>
<name>RL3_HELMI</name>
<dbReference type="EMBL" id="CP000930">
    <property type="protein sequence ID" value="ABZ83955.1"/>
    <property type="molecule type" value="Genomic_DNA"/>
</dbReference>
<dbReference type="RefSeq" id="WP_012282471.1">
    <property type="nucleotide sequence ID" value="NC_010337.2"/>
</dbReference>
<dbReference type="SMR" id="B0TC56"/>
<dbReference type="STRING" id="498761.HM1_1378"/>
<dbReference type="KEGG" id="hmo:HM1_1378"/>
<dbReference type="eggNOG" id="COG0087">
    <property type="taxonomic scope" value="Bacteria"/>
</dbReference>
<dbReference type="HOGENOM" id="CLU_044142_4_1_9"/>
<dbReference type="OrthoDB" id="9806135at2"/>
<dbReference type="Proteomes" id="UP000008550">
    <property type="component" value="Chromosome"/>
</dbReference>
<dbReference type="GO" id="GO:0022625">
    <property type="term" value="C:cytosolic large ribosomal subunit"/>
    <property type="evidence" value="ECO:0007669"/>
    <property type="project" value="TreeGrafter"/>
</dbReference>
<dbReference type="GO" id="GO:0019843">
    <property type="term" value="F:rRNA binding"/>
    <property type="evidence" value="ECO:0007669"/>
    <property type="project" value="UniProtKB-UniRule"/>
</dbReference>
<dbReference type="GO" id="GO:0003735">
    <property type="term" value="F:structural constituent of ribosome"/>
    <property type="evidence" value="ECO:0007669"/>
    <property type="project" value="InterPro"/>
</dbReference>
<dbReference type="GO" id="GO:0006412">
    <property type="term" value="P:translation"/>
    <property type="evidence" value="ECO:0007669"/>
    <property type="project" value="UniProtKB-UniRule"/>
</dbReference>
<dbReference type="FunFam" id="2.40.30.10:FF:000004">
    <property type="entry name" value="50S ribosomal protein L3"/>
    <property type="match status" value="1"/>
</dbReference>
<dbReference type="FunFam" id="3.30.160.810:FF:000001">
    <property type="entry name" value="50S ribosomal protein L3"/>
    <property type="match status" value="1"/>
</dbReference>
<dbReference type="Gene3D" id="3.30.160.810">
    <property type="match status" value="1"/>
</dbReference>
<dbReference type="Gene3D" id="2.40.30.10">
    <property type="entry name" value="Translation factors"/>
    <property type="match status" value="1"/>
</dbReference>
<dbReference type="HAMAP" id="MF_01325_B">
    <property type="entry name" value="Ribosomal_uL3_B"/>
    <property type="match status" value="1"/>
</dbReference>
<dbReference type="InterPro" id="IPR000597">
    <property type="entry name" value="Ribosomal_uL3"/>
</dbReference>
<dbReference type="InterPro" id="IPR019927">
    <property type="entry name" value="Ribosomal_uL3_bac/org-type"/>
</dbReference>
<dbReference type="InterPro" id="IPR019926">
    <property type="entry name" value="Ribosomal_uL3_CS"/>
</dbReference>
<dbReference type="InterPro" id="IPR009000">
    <property type="entry name" value="Transl_B-barrel_sf"/>
</dbReference>
<dbReference type="NCBIfam" id="TIGR03625">
    <property type="entry name" value="L3_bact"/>
    <property type="match status" value="1"/>
</dbReference>
<dbReference type="PANTHER" id="PTHR11229">
    <property type="entry name" value="50S RIBOSOMAL PROTEIN L3"/>
    <property type="match status" value="1"/>
</dbReference>
<dbReference type="PANTHER" id="PTHR11229:SF16">
    <property type="entry name" value="LARGE RIBOSOMAL SUBUNIT PROTEIN UL3C"/>
    <property type="match status" value="1"/>
</dbReference>
<dbReference type="Pfam" id="PF00297">
    <property type="entry name" value="Ribosomal_L3"/>
    <property type="match status" value="1"/>
</dbReference>
<dbReference type="SUPFAM" id="SSF50447">
    <property type="entry name" value="Translation proteins"/>
    <property type="match status" value="1"/>
</dbReference>
<dbReference type="PROSITE" id="PS00474">
    <property type="entry name" value="RIBOSOMAL_L3"/>
    <property type="match status" value="1"/>
</dbReference>
<feature type="chain" id="PRO_0000353603" description="Large ribosomal subunit protein uL3">
    <location>
        <begin position="1"/>
        <end position="210"/>
    </location>
</feature>
<feature type="region of interest" description="Disordered" evidence="2">
    <location>
        <begin position="132"/>
        <end position="152"/>
    </location>
</feature>
<feature type="compositionally biased region" description="Basic residues" evidence="2">
    <location>
        <begin position="132"/>
        <end position="144"/>
    </location>
</feature>
<comment type="function">
    <text evidence="1">One of the primary rRNA binding proteins, it binds directly near the 3'-end of the 23S rRNA, where it nucleates assembly of the 50S subunit.</text>
</comment>
<comment type="subunit">
    <text evidence="1">Part of the 50S ribosomal subunit. Forms a cluster with proteins L14 and L19.</text>
</comment>
<comment type="similarity">
    <text evidence="1">Belongs to the universal ribosomal protein uL3 family.</text>
</comment>
<reference key="1">
    <citation type="journal article" date="2008" name="J. Bacteriol.">
        <title>The genome of Heliobacterium modesticaldum, a phototrophic representative of the Firmicutes containing the simplest photosynthetic apparatus.</title>
        <authorList>
            <person name="Sattley W.M."/>
            <person name="Madigan M.T."/>
            <person name="Swingley W.D."/>
            <person name="Cheung P.C."/>
            <person name="Clocksin K.M."/>
            <person name="Conrad A.L."/>
            <person name="Dejesa L.C."/>
            <person name="Honchak B.M."/>
            <person name="Jung D.O."/>
            <person name="Karbach L.E."/>
            <person name="Kurdoglu A."/>
            <person name="Lahiri S."/>
            <person name="Mastrian S.D."/>
            <person name="Page L.E."/>
            <person name="Taylor H.L."/>
            <person name="Wang Z.T."/>
            <person name="Raymond J."/>
            <person name="Chen M."/>
            <person name="Blankenship R.E."/>
            <person name="Touchman J.W."/>
        </authorList>
    </citation>
    <scope>NUCLEOTIDE SEQUENCE [LARGE SCALE GENOMIC DNA]</scope>
    <source>
        <strain>ATCC 51547 / Ice1</strain>
    </source>
</reference>